<organism>
    <name type="scientific">Escherichia coli O157:H7</name>
    <dbReference type="NCBI Taxonomy" id="83334"/>
    <lineage>
        <taxon>Bacteria</taxon>
        <taxon>Pseudomonadati</taxon>
        <taxon>Pseudomonadota</taxon>
        <taxon>Gammaproteobacteria</taxon>
        <taxon>Enterobacterales</taxon>
        <taxon>Enterobacteriaceae</taxon>
        <taxon>Escherichia</taxon>
    </lineage>
</organism>
<sequence>MNITATVLLAFGMSMDAFAASIGKGATLHKPKFSEALRTGLIFGAVETLTPLIGWGMGMLASRFVLEWNHWIAFVLLIFLGGRMIIEGFRGADDEDEEPRRRHGFWLLVTTAIATSLDAMAVGVGLAFLQVNIIATALAIGCATLIMSTLGMMVGRFIGSIIGKKAEILGGLVLIGIGVQILWTHFHG</sequence>
<gene>
    <name evidence="1" type="primary">mntP</name>
    <name type="synonym">yebN</name>
    <name type="ordered locus">Z2864</name>
    <name type="ordered locus">ECs2531</name>
</gene>
<comment type="function">
    <text evidence="1">Probably functions as a manganese efflux pump.</text>
</comment>
<comment type="subcellular location">
    <subcellularLocation>
        <location evidence="1">Cell inner membrane</location>
        <topology evidence="1">Multi-pass membrane protein</topology>
    </subcellularLocation>
</comment>
<comment type="similarity">
    <text evidence="1">Belongs to the MntP (TC 9.B.29) family.</text>
</comment>
<comment type="sequence caution" evidence="2">
    <conflict type="erroneous initiation">
        <sequence resource="EMBL-CDS" id="AAG56810"/>
    </conflict>
    <text>Extended N-terminus.</text>
</comment>
<dbReference type="EMBL" id="AE005174">
    <property type="protein sequence ID" value="AAG56810.1"/>
    <property type="status" value="ALT_INIT"/>
    <property type="molecule type" value="Genomic_DNA"/>
</dbReference>
<dbReference type="EMBL" id="BA000007">
    <property type="protein sequence ID" value="BAB35954.2"/>
    <property type="molecule type" value="Genomic_DNA"/>
</dbReference>
<dbReference type="PIR" id="C90945">
    <property type="entry name" value="C90945"/>
</dbReference>
<dbReference type="PIR" id="F85793">
    <property type="entry name" value="F85793"/>
</dbReference>
<dbReference type="RefSeq" id="NP_310558.1">
    <property type="nucleotide sequence ID" value="NC_002695.1"/>
</dbReference>
<dbReference type="RefSeq" id="WP_001296134.1">
    <property type="nucleotide sequence ID" value="NZ_VOAI01000010.1"/>
</dbReference>
<dbReference type="STRING" id="155864.Z2864"/>
<dbReference type="GeneID" id="913981"/>
<dbReference type="GeneID" id="93776070"/>
<dbReference type="KEGG" id="ece:Z2864"/>
<dbReference type="KEGG" id="ecs:ECs_2531"/>
<dbReference type="PATRIC" id="fig|386585.9.peg.2653"/>
<dbReference type="eggNOG" id="COG1971">
    <property type="taxonomic scope" value="Bacteria"/>
</dbReference>
<dbReference type="HOGENOM" id="CLU_096410_0_0_6"/>
<dbReference type="OMA" id="WHFGLFQ"/>
<dbReference type="Proteomes" id="UP000000558">
    <property type="component" value="Chromosome"/>
</dbReference>
<dbReference type="Proteomes" id="UP000002519">
    <property type="component" value="Chromosome"/>
</dbReference>
<dbReference type="GO" id="GO:0005886">
    <property type="term" value="C:plasma membrane"/>
    <property type="evidence" value="ECO:0007669"/>
    <property type="project" value="UniProtKB-SubCell"/>
</dbReference>
<dbReference type="GO" id="GO:0005384">
    <property type="term" value="F:manganese ion transmembrane transporter activity"/>
    <property type="evidence" value="ECO:0007669"/>
    <property type="project" value="UniProtKB-UniRule"/>
</dbReference>
<dbReference type="HAMAP" id="MF_01521">
    <property type="entry name" value="MntP_pump"/>
    <property type="match status" value="1"/>
</dbReference>
<dbReference type="InterPro" id="IPR003810">
    <property type="entry name" value="Mntp/YtaF"/>
</dbReference>
<dbReference type="InterPro" id="IPR022929">
    <property type="entry name" value="Put_MntP"/>
</dbReference>
<dbReference type="NCBIfam" id="NF008546">
    <property type="entry name" value="PRK11469.1"/>
    <property type="match status" value="1"/>
</dbReference>
<dbReference type="PANTHER" id="PTHR35529">
    <property type="entry name" value="MANGANESE EFFLUX PUMP MNTP-RELATED"/>
    <property type="match status" value="1"/>
</dbReference>
<dbReference type="PANTHER" id="PTHR35529:SF1">
    <property type="entry name" value="MANGANESE EFFLUX PUMP MNTP-RELATED"/>
    <property type="match status" value="1"/>
</dbReference>
<dbReference type="Pfam" id="PF02659">
    <property type="entry name" value="Mntp"/>
    <property type="match status" value="1"/>
</dbReference>
<proteinExistence type="inferred from homology"/>
<accession>Q8XCP1</accession>
<accession>Q7AD91</accession>
<reference key="1">
    <citation type="journal article" date="2001" name="Nature">
        <title>Genome sequence of enterohaemorrhagic Escherichia coli O157:H7.</title>
        <authorList>
            <person name="Perna N.T."/>
            <person name="Plunkett G. III"/>
            <person name="Burland V."/>
            <person name="Mau B."/>
            <person name="Glasner J.D."/>
            <person name="Rose D.J."/>
            <person name="Mayhew G.F."/>
            <person name="Evans P.S."/>
            <person name="Gregor J."/>
            <person name="Kirkpatrick H.A."/>
            <person name="Posfai G."/>
            <person name="Hackett J."/>
            <person name="Klink S."/>
            <person name="Boutin A."/>
            <person name="Shao Y."/>
            <person name="Miller L."/>
            <person name="Grotbeck E.J."/>
            <person name="Davis N.W."/>
            <person name="Lim A."/>
            <person name="Dimalanta E.T."/>
            <person name="Potamousis K."/>
            <person name="Apodaca J."/>
            <person name="Anantharaman T.S."/>
            <person name="Lin J."/>
            <person name="Yen G."/>
            <person name="Schwartz D.C."/>
            <person name="Welch R.A."/>
            <person name="Blattner F.R."/>
        </authorList>
    </citation>
    <scope>NUCLEOTIDE SEQUENCE [LARGE SCALE GENOMIC DNA]</scope>
    <source>
        <strain>O157:H7 / EDL933 / ATCC 700927 / EHEC</strain>
    </source>
</reference>
<reference key="2">
    <citation type="journal article" date="2001" name="DNA Res.">
        <title>Complete genome sequence of enterohemorrhagic Escherichia coli O157:H7 and genomic comparison with a laboratory strain K-12.</title>
        <authorList>
            <person name="Hayashi T."/>
            <person name="Makino K."/>
            <person name="Ohnishi M."/>
            <person name="Kurokawa K."/>
            <person name="Ishii K."/>
            <person name="Yokoyama K."/>
            <person name="Han C.-G."/>
            <person name="Ohtsubo E."/>
            <person name="Nakayama K."/>
            <person name="Murata T."/>
            <person name="Tanaka M."/>
            <person name="Tobe T."/>
            <person name="Iida T."/>
            <person name="Takami H."/>
            <person name="Honda T."/>
            <person name="Sasakawa C."/>
            <person name="Ogasawara N."/>
            <person name="Yasunaga T."/>
            <person name="Kuhara S."/>
            <person name="Shiba T."/>
            <person name="Hattori M."/>
            <person name="Shinagawa H."/>
        </authorList>
    </citation>
    <scope>NUCLEOTIDE SEQUENCE [LARGE SCALE GENOMIC DNA]</scope>
    <source>
        <strain>O157:H7 / Sakai / RIMD 0509952 / EHEC</strain>
    </source>
</reference>
<feature type="chain" id="PRO_0000155651" description="Probable manganese efflux pump MntP">
    <location>
        <begin position="1"/>
        <end position="188"/>
    </location>
</feature>
<feature type="transmembrane region" description="Helical" evidence="1">
    <location>
        <begin position="3"/>
        <end position="23"/>
    </location>
</feature>
<feature type="transmembrane region" description="Helical" evidence="1">
    <location>
        <begin position="66"/>
        <end position="86"/>
    </location>
</feature>
<feature type="transmembrane region" description="Helical" evidence="1">
    <location>
        <begin position="106"/>
        <end position="128"/>
    </location>
</feature>
<feature type="transmembrane region" description="Helical" evidence="1">
    <location>
        <begin position="143"/>
        <end position="163"/>
    </location>
</feature>
<feature type="transmembrane region" description="Helical" evidence="1">
    <location>
        <begin position="168"/>
        <end position="188"/>
    </location>
</feature>
<evidence type="ECO:0000255" key="1">
    <source>
        <dbReference type="HAMAP-Rule" id="MF_01521"/>
    </source>
</evidence>
<evidence type="ECO:0000305" key="2"/>
<protein>
    <recommendedName>
        <fullName evidence="1">Probable manganese efflux pump MntP</fullName>
    </recommendedName>
</protein>
<name>MNTP_ECO57</name>
<keyword id="KW-0997">Cell inner membrane</keyword>
<keyword id="KW-1003">Cell membrane</keyword>
<keyword id="KW-0406">Ion transport</keyword>
<keyword id="KW-0464">Manganese</keyword>
<keyword id="KW-0472">Membrane</keyword>
<keyword id="KW-1185">Reference proteome</keyword>
<keyword id="KW-0812">Transmembrane</keyword>
<keyword id="KW-1133">Transmembrane helix</keyword>
<keyword id="KW-0813">Transport</keyword>